<protein>
    <recommendedName>
        <fullName evidence="1">Eukaryotic translation initiation factor 3 subunit B</fullName>
        <shortName evidence="1">eIF3b</shortName>
    </recommendedName>
    <alternativeName>
        <fullName evidence="1">Eukaryotic translation initiation factor 3 90 kDa subunit homolog</fullName>
        <shortName evidence="1">eIF3 p90</shortName>
    </alternativeName>
    <alternativeName>
        <fullName evidence="1">Translation initiation factor eIF3, p90 subunit homolog</fullName>
    </alternativeName>
</protein>
<name>EIF3B_BOTFB</name>
<feature type="chain" id="PRO_0000366875" description="Eukaryotic translation initiation factor 3 subunit B">
    <location>
        <begin position="1"/>
        <end position="744"/>
    </location>
</feature>
<feature type="domain" description="RRM" evidence="1">
    <location>
        <begin position="40"/>
        <end position="126"/>
    </location>
</feature>
<feature type="repeat" description="WD 1">
    <location>
        <begin position="193"/>
        <end position="232"/>
    </location>
</feature>
<feature type="repeat" description="WD 2">
    <location>
        <begin position="234"/>
        <end position="290"/>
    </location>
</feature>
<feature type="repeat" description="WD 3">
    <location>
        <begin position="307"/>
        <end position="348"/>
    </location>
</feature>
<feature type="repeat" description="WD 4">
    <location>
        <begin position="577"/>
        <end position="622"/>
    </location>
</feature>
<feature type="region of interest" description="Disordered" evidence="2">
    <location>
        <begin position="1"/>
        <end position="21"/>
    </location>
</feature>
<feature type="compositionally biased region" description="Acidic residues" evidence="2">
    <location>
        <begin position="11"/>
        <end position="21"/>
    </location>
</feature>
<gene>
    <name type="primary">prt1</name>
    <name type="ORF">BC1G_11866</name>
    <name type="ORF">BCIN_01g02680</name>
</gene>
<comment type="function">
    <text evidence="1">RNA-binding component of the eukaryotic translation initiation factor 3 (eIF-3) complex, which is involved in protein synthesis of a specialized repertoire of mRNAs and, together with other initiation factors, stimulates binding of mRNA and methionyl-tRNAi to the 40S ribosome. The eIF-3 complex specifically targets and initiates translation of a subset of mRNAs involved in cell proliferation.</text>
</comment>
<comment type="subunit">
    <text evidence="1">Component of the eukaryotic translation initiation factor 3 (eIF-3) complex.</text>
</comment>
<comment type="subcellular location">
    <subcellularLocation>
        <location evidence="1">Cytoplasm</location>
    </subcellularLocation>
</comment>
<comment type="similarity">
    <text evidence="1">Belongs to the eIF-3 subunit B family.</text>
</comment>
<proteinExistence type="inferred from homology"/>
<evidence type="ECO:0000255" key="1">
    <source>
        <dbReference type="HAMAP-Rule" id="MF_03001"/>
    </source>
</evidence>
<evidence type="ECO:0000256" key="2">
    <source>
        <dbReference type="SAM" id="MobiDB-lite"/>
    </source>
</evidence>
<keyword id="KW-0963">Cytoplasm</keyword>
<keyword id="KW-0396">Initiation factor</keyword>
<keyword id="KW-0648">Protein biosynthesis</keyword>
<keyword id="KW-1185">Reference proteome</keyword>
<keyword id="KW-0677">Repeat</keyword>
<keyword id="KW-0694">RNA-binding</keyword>
<keyword id="KW-0853">WD repeat</keyword>
<sequence>MAPSFDHLPDPEEDEYDEEELDISDLRERFEVQLEQGLDTFVVIDGLPEVNEDTKPKLIKFLLRKLDSVGQTKKDSIHMPIGPDGKSHKFAFVEYSSPVEAIAACKALDGVPLDKKHTLRVNKLTDIDRYGREGRIDENYTPPKIEEFTEKEHLRSWLADPAGRGRDQFVMYKDDRVQVLWNNEKDAPESIVDRQHWTESFVQWSPQGTFLTSMHQQGVQLWGGPSWTRQKRFAHPFVNLVDFSPGEKYLTTWSNRPITIGEEGHPALSIDDDGKNYVIWDIETGLPLRSFANLDLPSNSVDADGNPIKRKIQWPAFKWSSDDKYVARLTQGSSISVYELPKMNLLDKTSIKIDGVMDFDWAPATPHREGVKTYEQLFCYWTPEIGSNPAKVGLMSIPSKEVVRTLNLFSVTDAKLHWQSDASYLCVKVDRHSKSKKSLATSLEIFRVKEKGVPVEVVDSIKDTVINFAWEPKGDRFVIITTAEVVAATAVPPKTSVSFYCPEKVKGNGVGNFKHIRTYDKKNSNAIYWSPKGRFVIVATVHSQQSFDMEFYDMDFEGEKPESDKDLTANLQLMNTADHYGVTDIDWDPTGRFVATSASIWKHTMENGYHLYDFKGEQLREEPVEKFKQWLWRPRPPTLLSKEEQKQIRKNLREYSKVFDQEDADRGASADLAVVEHRRRLLDEWLAWRANMEEDVKADREDAGLPLDPLEPLKSKMASGDEGQAIEIEEIVEEIVEETEEIIS</sequence>
<organism>
    <name type="scientific">Botryotinia fuckeliana (strain B05.10)</name>
    <name type="common">Noble rot fungus</name>
    <name type="synonym">Botrytis cinerea</name>
    <dbReference type="NCBI Taxonomy" id="332648"/>
    <lineage>
        <taxon>Eukaryota</taxon>
        <taxon>Fungi</taxon>
        <taxon>Dikarya</taxon>
        <taxon>Ascomycota</taxon>
        <taxon>Pezizomycotina</taxon>
        <taxon>Leotiomycetes</taxon>
        <taxon>Helotiales</taxon>
        <taxon>Sclerotiniaceae</taxon>
        <taxon>Botrytis</taxon>
    </lineage>
</organism>
<reference key="1">
    <citation type="journal article" date="2011" name="PLoS Genet.">
        <title>Genomic analysis of the necrotrophic fungal pathogens Sclerotinia sclerotiorum and Botrytis cinerea.</title>
        <authorList>
            <person name="Amselem J."/>
            <person name="Cuomo C.A."/>
            <person name="van Kan J.A.L."/>
            <person name="Viaud M."/>
            <person name="Benito E.P."/>
            <person name="Couloux A."/>
            <person name="Coutinho P.M."/>
            <person name="de Vries R.P."/>
            <person name="Dyer P.S."/>
            <person name="Fillinger S."/>
            <person name="Fournier E."/>
            <person name="Gout L."/>
            <person name="Hahn M."/>
            <person name="Kohn L."/>
            <person name="Lapalu N."/>
            <person name="Plummer K.M."/>
            <person name="Pradier J.-M."/>
            <person name="Quevillon E."/>
            <person name="Sharon A."/>
            <person name="Simon A."/>
            <person name="ten Have A."/>
            <person name="Tudzynski B."/>
            <person name="Tudzynski P."/>
            <person name="Wincker P."/>
            <person name="Andrew M."/>
            <person name="Anthouard V."/>
            <person name="Beever R.E."/>
            <person name="Beffa R."/>
            <person name="Benoit I."/>
            <person name="Bouzid O."/>
            <person name="Brault B."/>
            <person name="Chen Z."/>
            <person name="Choquer M."/>
            <person name="Collemare J."/>
            <person name="Cotton P."/>
            <person name="Danchin E.G."/>
            <person name="Da Silva C."/>
            <person name="Gautier A."/>
            <person name="Giraud C."/>
            <person name="Giraud T."/>
            <person name="Gonzalez C."/>
            <person name="Grossetete S."/>
            <person name="Gueldener U."/>
            <person name="Henrissat B."/>
            <person name="Howlett B.J."/>
            <person name="Kodira C."/>
            <person name="Kretschmer M."/>
            <person name="Lappartient A."/>
            <person name="Leroch M."/>
            <person name="Levis C."/>
            <person name="Mauceli E."/>
            <person name="Neuveglise C."/>
            <person name="Oeser B."/>
            <person name="Pearson M."/>
            <person name="Poulain J."/>
            <person name="Poussereau N."/>
            <person name="Quesneville H."/>
            <person name="Rascle C."/>
            <person name="Schumacher J."/>
            <person name="Segurens B."/>
            <person name="Sexton A."/>
            <person name="Silva E."/>
            <person name="Sirven C."/>
            <person name="Soanes D.M."/>
            <person name="Talbot N.J."/>
            <person name="Templeton M."/>
            <person name="Yandava C."/>
            <person name="Yarden O."/>
            <person name="Zeng Q."/>
            <person name="Rollins J.A."/>
            <person name="Lebrun M.-H."/>
            <person name="Dickman M."/>
        </authorList>
    </citation>
    <scope>NUCLEOTIDE SEQUENCE [LARGE SCALE GENOMIC DNA]</scope>
    <source>
        <strain>B05.10</strain>
    </source>
</reference>
<reference key="2">
    <citation type="journal article" date="2012" name="Eukaryot. Cell">
        <title>Genome update of Botrytis cinerea strains B05.10 and T4.</title>
        <authorList>
            <person name="Staats M."/>
            <person name="van Kan J.A.L."/>
        </authorList>
    </citation>
    <scope>NUCLEOTIDE SEQUENCE [LARGE SCALE GENOMIC DNA]</scope>
    <scope>GENOME REANNOTATION</scope>
    <source>
        <strain>B05.10</strain>
    </source>
</reference>
<reference key="3">
    <citation type="journal article" date="2017" name="Mol. Plant Pathol.">
        <title>A gapless genome sequence of the fungus Botrytis cinerea.</title>
        <authorList>
            <person name="van Kan J.A.L."/>
            <person name="Stassen J.H.M."/>
            <person name="Mosbach A."/>
            <person name="van der Lee T.A.J."/>
            <person name="Faino L."/>
            <person name="Farmer A.D."/>
            <person name="Papasotiriou D.G."/>
            <person name="Zhou S."/>
            <person name="Seidl M.F."/>
            <person name="Cottam E."/>
            <person name="Edel D."/>
            <person name="Hahn M."/>
            <person name="Schwartz D.C."/>
            <person name="Dietrich R.A."/>
            <person name="Widdison S."/>
            <person name="Scalliet G."/>
        </authorList>
    </citation>
    <scope>NUCLEOTIDE SEQUENCE [LARGE SCALE GENOMIC DNA]</scope>
    <scope>GENOME REANNOTATION</scope>
    <source>
        <strain>B05.10</strain>
    </source>
</reference>
<accession>A6SFQ6</accession>
<accession>A0A384J4Q7</accession>
<dbReference type="EMBL" id="CP009805">
    <property type="protein sequence ID" value="ATZ45497.1"/>
    <property type="molecule type" value="Genomic_DNA"/>
</dbReference>
<dbReference type="SMR" id="A6SFQ6"/>
<dbReference type="EnsemblFungi" id="Bcin01g02680.1">
    <property type="protein sequence ID" value="Bcin01p02680.1"/>
    <property type="gene ID" value="Bcin01g02680"/>
</dbReference>
<dbReference type="GeneID" id="5430467"/>
<dbReference type="KEGG" id="bfu:BCIN_01g02680"/>
<dbReference type="VEuPathDB" id="FungiDB:Bcin01g02680"/>
<dbReference type="OMA" id="LWGGPQF"/>
<dbReference type="OrthoDB" id="10250414at2759"/>
<dbReference type="Proteomes" id="UP000001798">
    <property type="component" value="Chromosome bcin01"/>
</dbReference>
<dbReference type="GO" id="GO:0010494">
    <property type="term" value="C:cytoplasmic stress granule"/>
    <property type="evidence" value="ECO:0007669"/>
    <property type="project" value="EnsemblFungi"/>
</dbReference>
<dbReference type="GO" id="GO:0016282">
    <property type="term" value="C:eukaryotic 43S preinitiation complex"/>
    <property type="evidence" value="ECO:0007669"/>
    <property type="project" value="UniProtKB-UniRule"/>
</dbReference>
<dbReference type="GO" id="GO:0033290">
    <property type="term" value="C:eukaryotic 48S preinitiation complex"/>
    <property type="evidence" value="ECO:0007669"/>
    <property type="project" value="UniProtKB-UniRule"/>
</dbReference>
<dbReference type="GO" id="GO:0071540">
    <property type="term" value="C:eukaryotic translation initiation factor 3 complex, eIF3e"/>
    <property type="evidence" value="ECO:0007669"/>
    <property type="project" value="EnsemblFungi"/>
</dbReference>
<dbReference type="GO" id="GO:0071541">
    <property type="term" value="C:eukaryotic translation initiation factor 3 complex, eIF3m"/>
    <property type="evidence" value="ECO:0007669"/>
    <property type="project" value="EnsemblFungi"/>
</dbReference>
<dbReference type="GO" id="GO:0043614">
    <property type="term" value="C:multi-eIF complex"/>
    <property type="evidence" value="ECO:0007669"/>
    <property type="project" value="EnsemblFungi"/>
</dbReference>
<dbReference type="GO" id="GO:0042802">
    <property type="term" value="F:identical protein binding"/>
    <property type="evidence" value="ECO:0007669"/>
    <property type="project" value="EnsemblFungi"/>
</dbReference>
<dbReference type="GO" id="GO:0003723">
    <property type="term" value="F:RNA binding"/>
    <property type="evidence" value="ECO:0007669"/>
    <property type="project" value="UniProtKB-UniRule"/>
</dbReference>
<dbReference type="GO" id="GO:0003743">
    <property type="term" value="F:translation initiation factor activity"/>
    <property type="evidence" value="ECO:0007669"/>
    <property type="project" value="UniProtKB-UniRule"/>
</dbReference>
<dbReference type="GO" id="GO:0031369">
    <property type="term" value="F:translation initiation factor binding"/>
    <property type="evidence" value="ECO:0007669"/>
    <property type="project" value="InterPro"/>
</dbReference>
<dbReference type="GO" id="GO:0001732">
    <property type="term" value="P:formation of cytoplasmic translation initiation complex"/>
    <property type="evidence" value="ECO:0007669"/>
    <property type="project" value="UniProtKB-UniRule"/>
</dbReference>
<dbReference type="CDD" id="cd12278">
    <property type="entry name" value="RRM_eIF3B"/>
    <property type="match status" value="1"/>
</dbReference>
<dbReference type="FunFam" id="2.130.10.10:FF:000419">
    <property type="entry name" value="Eukaryotic translation initiation factor 3 subunit B"/>
    <property type="match status" value="1"/>
</dbReference>
<dbReference type="FunFam" id="3.30.70.330:FF:000235">
    <property type="entry name" value="Eukaryotic translation initiation factor 3 subunit B"/>
    <property type="match status" value="1"/>
</dbReference>
<dbReference type="Gene3D" id="3.30.70.330">
    <property type="match status" value="1"/>
</dbReference>
<dbReference type="Gene3D" id="2.130.10.10">
    <property type="entry name" value="YVTN repeat-like/Quinoprotein amine dehydrogenase"/>
    <property type="match status" value="1"/>
</dbReference>
<dbReference type="HAMAP" id="MF_03001">
    <property type="entry name" value="eIF3b"/>
    <property type="match status" value="1"/>
</dbReference>
<dbReference type="InterPro" id="IPR011400">
    <property type="entry name" value="EIF3B"/>
</dbReference>
<dbReference type="InterPro" id="IPR034363">
    <property type="entry name" value="eIF3B_RRM"/>
</dbReference>
<dbReference type="InterPro" id="IPR012677">
    <property type="entry name" value="Nucleotide-bd_a/b_plait_sf"/>
</dbReference>
<dbReference type="InterPro" id="IPR035979">
    <property type="entry name" value="RBD_domain_sf"/>
</dbReference>
<dbReference type="InterPro" id="IPR000504">
    <property type="entry name" value="RRM_dom"/>
</dbReference>
<dbReference type="InterPro" id="IPR013979">
    <property type="entry name" value="TIF_beta_prop-like"/>
</dbReference>
<dbReference type="InterPro" id="IPR015943">
    <property type="entry name" value="WD40/YVTN_repeat-like_dom_sf"/>
</dbReference>
<dbReference type="PANTHER" id="PTHR14068">
    <property type="entry name" value="EUKARYOTIC TRANSLATION INITIATION FACTOR 3 EIF3 -RELATED"/>
    <property type="match status" value="1"/>
</dbReference>
<dbReference type="PANTHER" id="PTHR14068:SF0">
    <property type="entry name" value="EUKARYOTIC TRANSLATION INITIATION FACTOR 3 SUBUNIT B"/>
    <property type="match status" value="1"/>
</dbReference>
<dbReference type="Pfam" id="PF08662">
    <property type="entry name" value="eIF2A"/>
    <property type="match status" value="1"/>
</dbReference>
<dbReference type="Pfam" id="PF00076">
    <property type="entry name" value="RRM_1"/>
    <property type="match status" value="1"/>
</dbReference>
<dbReference type="PIRSF" id="PIRSF036424">
    <property type="entry name" value="eIF3b"/>
    <property type="match status" value="1"/>
</dbReference>
<dbReference type="SMART" id="SM00360">
    <property type="entry name" value="RRM"/>
    <property type="match status" value="1"/>
</dbReference>
<dbReference type="SUPFAM" id="SSF82171">
    <property type="entry name" value="DPP6 N-terminal domain-like"/>
    <property type="match status" value="1"/>
</dbReference>
<dbReference type="SUPFAM" id="SSF54928">
    <property type="entry name" value="RNA-binding domain, RBD"/>
    <property type="match status" value="1"/>
</dbReference>
<dbReference type="PROSITE" id="PS50102">
    <property type="entry name" value="RRM"/>
    <property type="match status" value="1"/>
</dbReference>